<reference key="1">
    <citation type="journal article" date="1985" name="Proc. Natl. Acad. Sci. U.S.A.">
        <title>Complete nucleotide sequence of the genome of bovine leukemia virus: its evolutionary relationship to other retroviruses.</title>
        <authorList>
            <person name="Sagata N."/>
            <person name="Yasunaga T."/>
            <person name="Tsuzuku-Kawamura J."/>
            <person name="Ohishi K."/>
            <person name="Ogawa Y."/>
            <person name="Ikawa Y."/>
        </authorList>
    </citation>
    <scope>NUCLEOTIDE SEQUENCE [GENOMIC RNA]</scope>
</reference>
<reference key="2">
    <citation type="journal article" date="1979" name="Proc. Natl. Acad. Sci. U.S.A.">
        <title>Amino-terminal sequence of bovine leukemia virus major internal protein: homology with mammalian type C virus p30 structural proteins.</title>
        <authorList>
            <person name="Oroszlan S."/>
            <person name="Copeland T.D."/>
            <person name="Henderson L.E."/>
            <person name="Stephenson J.R."/>
            <person name="Gilden R.V."/>
        </authorList>
    </citation>
    <scope>PROTEIN SEQUENCE OF 110-164</scope>
</reference>
<reference key="3">
    <citation type="journal article" date="1983" name="FEBS Lett.">
        <title>Complete amino acid sequence of the nucleic acid-binding protein of bovine leukemia virus.</title>
        <authorList>
            <person name="Copeland T.D."/>
            <person name="Morgan M.A."/>
            <person name="Oroszlan S."/>
        </authorList>
    </citation>
    <scope>PROTEIN SEQUENCE OF 324-392</scope>
</reference>
<evidence type="ECO:0000250" key="1">
    <source>
        <dbReference type="UniProtKB" id="P03345"/>
    </source>
</evidence>
<evidence type="ECO:0000250" key="2">
    <source>
        <dbReference type="UniProtKB" id="P25058"/>
    </source>
</evidence>
<evidence type="ECO:0000255" key="3"/>
<evidence type="ECO:0000255" key="4">
    <source>
        <dbReference type="PROSITE-ProRule" id="PRU00047"/>
    </source>
</evidence>
<evidence type="ECO:0000256" key="5">
    <source>
        <dbReference type="SAM" id="MobiDB-lite"/>
    </source>
</evidence>
<evidence type="ECO:0000305" key="6"/>
<feature type="initiator methionine" description="Removed; by host" evidence="3">
    <location>
        <position position="1"/>
    </location>
</feature>
<feature type="chain" id="PRO_0000442551" description="Gag polyprotein">
    <location>
        <begin position="2"/>
        <end position="392"/>
    </location>
</feature>
<feature type="chain" id="PRO_0000040833" description="Matrix protein p15">
    <location>
        <begin position="2"/>
        <end position="109"/>
    </location>
</feature>
<feature type="chain" id="PRO_0000040834" description="Capsid protein p24">
    <location>
        <begin position="110"/>
        <end position="323"/>
    </location>
</feature>
<feature type="chain" id="PRO_0000040835" description="Nucleocapsid protein p12-gag">
    <location>
        <begin position="324"/>
        <end position="392"/>
    </location>
</feature>
<feature type="repeat">
    <location>
        <begin position="342"/>
        <end position="362"/>
    </location>
</feature>
<feature type="repeat">
    <location>
        <begin position="367"/>
        <end position="387"/>
    </location>
</feature>
<feature type="zinc finger region" description="CCHC-type 1" evidence="4">
    <location>
        <begin position="345"/>
        <end position="362"/>
    </location>
</feature>
<feature type="zinc finger region" description="CCHC-type 2" evidence="4">
    <location>
        <begin position="370"/>
        <end position="387"/>
    </location>
</feature>
<feature type="region of interest" description="Disordered" evidence="5">
    <location>
        <begin position="327"/>
        <end position="346"/>
    </location>
</feature>
<feature type="region of interest" description="Disordered" evidence="5">
    <location>
        <begin position="361"/>
        <end position="392"/>
    </location>
</feature>
<feature type="short sequence motif" description="PPXY motif" evidence="2">
    <location>
        <begin position="100"/>
        <end position="103"/>
    </location>
</feature>
<feature type="compositionally biased region" description="Pro residues" evidence="5">
    <location>
        <begin position="329"/>
        <end position="346"/>
    </location>
</feature>
<feature type="compositionally biased region" description="Basic and acidic residues" evidence="5">
    <location>
        <begin position="377"/>
        <end position="386"/>
    </location>
</feature>
<feature type="site" description="Cleavage; by viral protease" evidence="1">
    <location>
        <begin position="109"/>
        <end position="110"/>
    </location>
</feature>
<feature type="site" description="Cleavage; by viral protease" evidence="1">
    <location>
        <begin position="323"/>
        <end position="324"/>
    </location>
</feature>
<feature type="lipid moiety-binding region" description="N-myristoyl glycine; by host" evidence="3">
    <location>
        <position position="2"/>
    </location>
</feature>
<organismHost>
    <name type="scientific">Bos taurus</name>
    <name type="common">Bovine</name>
    <dbReference type="NCBI Taxonomy" id="9913"/>
</organismHost>
<gene>
    <name type="primary">gag</name>
</gene>
<protein>
    <recommendedName>
        <fullName>Gag polyprotein</fullName>
    </recommendedName>
    <component>
        <recommendedName>
            <fullName>Matrix protein p15</fullName>
            <shortName>MA</shortName>
        </recommendedName>
    </component>
    <component>
        <recommendedName>
            <fullName>Capsid protein p24</fullName>
            <shortName>CA</shortName>
        </recommendedName>
    </component>
    <component>
        <recommendedName>
            <fullName>Nucleocapsid protein p12-gag</fullName>
        </recommendedName>
    </component>
</protein>
<organism>
    <name type="scientific">Bovine leukemia virus (isolate Japanese BLV-1)</name>
    <name type="common">BLV</name>
    <dbReference type="NCBI Taxonomy" id="11907"/>
    <lineage>
        <taxon>Viruses</taxon>
        <taxon>Riboviria</taxon>
        <taxon>Pararnavirae</taxon>
        <taxon>Artverviricota</taxon>
        <taxon>Revtraviricetes</taxon>
        <taxon>Ortervirales</taxon>
        <taxon>Retroviridae</taxon>
        <taxon>Orthoretrovirinae</taxon>
        <taxon>Deltaretrovirus</taxon>
        <taxon>Bovine leukemia virus</taxon>
    </lineage>
</organism>
<dbReference type="EMBL" id="K02120">
    <property type="protein sequence ID" value="AAA42784.1"/>
    <property type="molecule type" value="Genomic_RNA"/>
</dbReference>
<dbReference type="PIR" id="A94063">
    <property type="entry name" value="FOLJGB"/>
</dbReference>
<dbReference type="SMR" id="P03344"/>
<dbReference type="GO" id="GO:0019013">
    <property type="term" value="C:viral nucleocapsid"/>
    <property type="evidence" value="ECO:0007669"/>
    <property type="project" value="UniProtKB-KW"/>
</dbReference>
<dbReference type="GO" id="GO:0003676">
    <property type="term" value="F:nucleic acid binding"/>
    <property type="evidence" value="ECO:0007669"/>
    <property type="project" value="InterPro"/>
</dbReference>
<dbReference type="GO" id="GO:0039660">
    <property type="term" value="F:structural constituent of virion"/>
    <property type="evidence" value="ECO:0007669"/>
    <property type="project" value="UniProtKB-KW"/>
</dbReference>
<dbReference type="GO" id="GO:0008270">
    <property type="term" value="F:zinc ion binding"/>
    <property type="evidence" value="ECO:0007669"/>
    <property type="project" value="UniProtKB-KW"/>
</dbReference>
<dbReference type="GO" id="GO:0039702">
    <property type="term" value="P:viral budding via host ESCRT complex"/>
    <property type="evidence" value="ECO:0007669"/>
    <property type="project" value="UniProtKB-KW"/>
</dbReference>
<dbReference type="GO" id="GO:0075523">
    <property type="term" value="P:viral translational frameshifting"/>
    <property type="evidence" value="ECO:0007669"/>
    <property type="project" value="UniProtKB-KW"/>
</dbReference>
<dbReference type="FunFam" id="4.10.60.10:FF:000119">
    <property type="entry name" value="Gag polyprotein"/>
    <property type="match status" value="1"/>
</dbReference>
<dbReference type="Gene3D" id="1.10.1200.30">
    <property type="match status" value="1"/>
</dbReference>
<dbReference type="Gene3D" id="1.10.375.10">
    <property type="entry name" value="Human Immunodeficiency Virus Type 1 Capsid Protein"/>
    <property type="match status" value="1"/>
</dbReference>
<dbReference type="Gene3D" id="4.10.60.10">
    <property type="entry name" value="Zinc finger, CCHC-type"/>
    <property type="match status" value="1"/>
</dbReference>
<dbReference type="InterPro" id="IPR003139">
    <property type="entry name" value="D_retro_matrix"/>
</dbReference>
<dbReference type="InterPro" id="IPR050195">
    <property type="entry name" value="Primate_lentivir_Gag_pol-like"/>
</dbReference>
<dbReference type="InterPro" id="IPR008916">
    <property type="entry name" value="Retrov_capsid_C"/>
</dbReference>
<dbReference type="InterPro" id="IPR008919">
    <property type="entry name" value="Retrov_capsid_N"/>
</dbReference>
<dbReference type="InterPro" id="IPR010999">
    <property type="entry name" value="Retrovr_matrix"/>
</dbReference>
<dbReference type="InterPro" id="IPR001878">
    <property type="entry name" value="Znf_CCHC"/>
</dbReference>
<dbReference type="InterPro" id="IPR036875">
    <property type="entry name" value="Znf_CCHC_sf"/>
</dbReference>
<dbReference type="PANTHER" id="PTHR40389">
    <property type="entry name" value="ENDOGENOUS RETROVIRUS GROUP K MEMBER 24 GAG POLYPROTEIN-RELATED"/>
    <property type="match status" value="1"/>
</dbReference>
<dbReference type="PANTHER" id="PTHR40389:SF3">
    <property type="entry name" value="IGE-BINDING PROTEIN"/>
    <property type="match status" value="1"/>
</dbReference>
<dbReference type="Pfam" id="PF02228">
    <property type="entry name" value="Gag_p19"/>
    <property type="match status" value="1"/>
</dbReference>
<dbReference type="Pfam" id="PF00607">
    <property type="entry name" value="Gag_p24"/>
    <property type="match status" value="1"/>
</dbReference>
<dbReference type="Pfam" id="PF00098">
    <property type="entry name" value="zf-CCHC"/>
    <property type="match status" value="1"/>
</dbReference>
<dbReference type="SMART" id="SM00343">
    <property type="entry name" value="ZnF_C2HC"/>
    <property type="match status" value="2"/>
</dbReference>
<dbReference type="SUPFAM" id="SSF47836">
    <property type="entry name" value="Retroviral matrix proteins"/>
    <property type="match status" value="1"/>
</dbReference>
<dbReference type="SUPFAM" id="SSF47353">
    <property type="entry name" value="Retrovirus capsid dimerization domain-like"/>
    <property type="match status" value="1"/>
</dbReference>
<dbReference type="SUPFAM" id="SSF47943">
    <property type="entry name" value="Retrovirus capsid protein, N-terminal core domain"/>
    <property type="match status" value="1"/>
</dbReference>
<dbReference type="SUPFAM" id="SSF57756">
    <property type="entry name" value="Retrovirus zinc finger-like domains"/>
    <property type="match status" value="1"/>
</dbReference>
<dbReference type="PROSITE" id="PS50158">
    <property type="entry name" value="ZF_CCHC"/>
    <property type="match status" value="1"/>
</dbReference>
<accession>P03344</accession>
<comment type="function">
    <molecule>Gag polyprotein</molecule>
    <text evidence="1">The matrix domain targets Gag, Gag-Pro and Gag-Pro-Pol polyproteins to the plasma membrane via a multipartite membrane binding signal, that includes its myristoylated N-terminus.</text>
</comment>
<comment type="function">
    <molecule>Matrix protein p15</molecule>
    <text evidence="1">Matrix protein.</text>
</comment>
<comment type="function">
    <molecule>Capsid protein p24</molecule>
    <text evidence="1">Forms the spherical core of the virus that encapsulates the genomic RNA-nucleocapsid complex.</text>
</comment>
<comment type="function">
    <molecule>Nucleocapsid protein p12-gag</molecule>
    <text evidence="1">Binds strongly to viral nucleic acids and promote their aggregation. Also destabilizes the nucleic acids duplexes via highly structured zinc-binding motifs.</text>
</comment>
<comment type="subunit">
    <molecule>Gag polyprotein</molecule>
    <text evidence="1">Homodimer; the homodimers are part of the immature particles. Interacts with host NEDD4; these interactions are essential for budding and release of viral particles.</text>
</comment>
<comment type="subunit">
    <molecule>Matrix protein p15</molecule>
    <text evidence="1">Homodimer; further assembles as homohexamers.</text>
</comment>
<comment type="subcellular location">
    <molecule>Matrix protein p15</molecule>
    <subcellularLocation>
        <location evidence="1">Virion</location>
    </subcellularLocation>
</comment>
<comment type="subcellular location">
    <molecule>Capsid protein p24</molecule>
    <subcellularLocation>
        <location evidence="1">Virion</location>
    </subcellularLocation>
</comment>
<comment type="subcellular location">
    <molecule>Nucleocapsid protein p12-gag</molecule>
    <subcellularLocation>
        <location evidence="1">Virion</location>
    </subcellularLocation>
</comment>
<comment type="alternative products">
    <event type="ribosomal frameshifting"/>
    <isoform>
        <id>P03344-1</id>
        <name>Gag polyprotein</name>
        <sequence type="displayed"/>
    </isoform>
    <isoform>
        <id>P0DOI0-1</id>
        <name>Gag-Pro polyprotein</name>
        <sequence type="external"/>
    </isoform>
    <isoform>
        <id>P03361-1</id>
        <name>Gag-Pro-Pol polyprotein</name>
        <sequence type="external"/>
    </isoform>
</comment>
<comment type="domain">
    <molecule>Gag polyprotein</molecule>
    <text evidence="2">Late-budding domains (L domains) are short sequence motifs essential for viral particle release. They can occur individually or in close proximity within structural proteins. They interacts with sorting cellular proteins of the multivesicular body (MVB) pathway. Most of these proteins are class E vacuolar protein sorting factors belonging to ESCRT-I, ESCRT-II or ESCRT-III complexes. Matrix protein p15 contains one L domain: a PPXY motif which binds to the WW domains of the ubiquitin ligase NEDD4.</text>
</comment>
<comment type="domain">
    <molecule>Capsid protein p24</molecule>
    <text evidence="1">The capsid protein N-terminus seems to be involved in Gag-Gag interactions.</text>
</comment>
<comment type="PTM">
    <molecule>Gag polyprotein</molecule>
    <text evidence="1">Specific enzymatic cleavages by the viral protease yield mature proteins. The polyprotein is cleaved during and after budding, this process is termed maturation.</text>
</comment>
<comment type="PTM">
    <molecule>Gag polyprotein</molecule>
    <text evidence="1">Myristoylated. Myristoylation of the matrix (MA) domain mediates the transport and binding of Gag polyproteins to the host plasma membrane and is required for the assembly of viral particles.</text>
</comment>
<comment type="miscellaneous">
    <molecule>Isoform Gag polyprotein</molecule>
    <text evidence="6">Produced by conventional translation.</text>
</comment>
<name>GAG_BLVJ</name>
<sequence length="392" mass="42532">MGNSPSYNPPAGISPSDWLNLLQSAQRLNPRPSPSDFTDLKNYIHWFHKTQKKPWTFTSGGPTSCPPGRFGRVPLVLATLNEVLSNEGGAPGASAPEEQPPPYDPPAILPIISEGNRNRHRAWALRELQDIKKEIENKAPGSQVWIQTLRLAILQADPTPADLEQLCQYIASPVDQTAHMTSLTAAIAAAEAATPSRVLTPKTGTLTQQSAQPNAGDLRSQYQNLWLQAGKISLLVLQLQPWSTIVQGPAESSVEFVNRLQISLADNLPDGVLRNPLLTPLVMQMLTESVSKFCRGEASGRGGAKTAGLRTIGPPRMKQPALLVHTPGPKMPGPRQPAPKRPPPGPCYRCLKEGHWARDCPTKATGPPPGPCPICKDPSHWKRDCPTLKSKN</sequence>
<keyword id="KW-0167">Capsid protein</keyword>
<keyword id="KW-0903">Direct protein sequencing</keyword>
<keyword id="KW-0945">Host-virus interaction</keyword>
<keyword id="KW-0449">Lipoprotein</keyword>
<keyword id="KW-0479">Metal-binding</keyword>
<keyword id="KW-0519">Myristate</keyword>
<keyword id="KW-0597">Phosphoprotein</keyword>
<keyword id="KW-0677">Repeat</keyword>
<keyword id="KW-0688">Ribosomal frameshifting</keyword>
<keyword id="KW-1198">Viral budding</keyword>
<keyword id="KW-1187">Viral budding via the host ESCRT complexes</keyword>
<keyword id="KW-0468">Viral matrix protein</keyword>
<keyword id="KW-0543">Viral nucleoprotein</keyword>
<keyword id="KW-1188">Viral release from host cell</keyword>
<keyword id="KW-0946">Virion</keyword>
<keyword id="KW-0862">Zinc</keyword>
<keyword id="KW-0863">Zinc-finger</keyword>
<proteinExistence type="evidence at protein level"/>